<organism>
    <name type="scientific">Dictyostelium discoideum</name>
    <name type="common">Social amoeba</name>
    <dbReference type="NCBI Taxonomy" id="44689"/>
    <lineage>
        <taxon>Eukaryota</taxon>
        <taxon>Amoebozoa</taxon>
        <taxon>Evosea</taxon>
        <taxon>Eumycetozoa</taxon>
        <taxon>Dictyostelia</taxon>
        <taxon>Dictyosteliales</taxon>
        <taxon>Dictyosteliaceae</taxon>
        <taxon>Dictyostelium</taxon>
    </lineage>
</organism>
<sequence length="528" mass="58239">MDKANDYLKDYQPAKLVLATAGITAASILAYQAITDRDFKDKLNKKIFRSIKSMPGVSDIVKKERAKAKVELKKMFKTDVRNAHYTLPLKGIKHEDLIEEMKALAKVDESHWVDSKVSGCVYLGEKEHTKLLNEAYSLFSLSNPLHPSVFPSIRKFETESISMVSNMLNAHSKVVGSLTSGGTESIFMAVKAYRDFYKDRTDRPEIVVPVTIHAAFDKACEYLKIRIVHIDVDPVSYKVDMAAMKKAINKDTILVAGSAVNFPHGIIDPIDEIAKLAQQYDIGCHVDACLGGFILPFAEKLDYDIPVFDFRIPGVTSMSVDTHKFGYAAKGTSVVLFGNKKLRRAMYFVAPNWPGGIYASPTLPGSRPGGLVAACWASLVSMGNDGFLEKAKGVMETTKKIIKGLQSINGVKIIGDPKAMVVAFTCDNIFYVNDYMSKKGWHLNALQRPNSLHVCVTAKMIGMESLFIEDLKDSIKLVKDNSGSLPKDGTAPIYGSAHSVPDREMVGTILSDFIDELITPDYKPSQST</sequence>
<gene>
    <name type="primary">sglA</name>
    <name type="ORF">DDB_G0282819</name>
</gene>
<protein>
    <recommendedName>
        <fullName>Sphingosine-1-phosphate lyase</fullName>
        <shortName>S1P lyase</shortName>
        <shortName>S1PL</shortName>
        <shortName>SP-lyase</shortName>
        <shortName>SPL</shortName>
        <ecNumber>4.1.2.27</ecNumber>
    </recommendedName>
    <alternativeName>
        <fullName>Sphingosine-1-phosphate aldolase</fullName>
    </alternativeName>
</protein>
<feature type="chain" id="PRO_0000328248" description="Sphingosine-1-phosphate lyase">
    <location>
        <begin position="1"/>
        <end position="528"/>
    </location>
</feature>
<feature type="transmembrane region" description="Helical" evidence="2">
    <location>
        <begin position="13"/>
        <end position="35"/>
    </location>
</feature>
<feature type="modified residue" description="N6-(pyridoxal phosphate)lysine" evidence="1">
    <location>
        <position position="324"/>
    </location>
</feature>
<feature type="sequence conflict" description="In Ref. 1; AAP37027." evidence="7" ref="1">
    <original>K</original>
    <variation>R</variation>
    <location>
        <position position="90"/>
    </location>
</feature>
<feature type="sequence conflict" description="In Ref. 1; AAP37027." evidence="7" ref="1">
    <original>D</original>
    <variation>G</variation>
    <location>
        <position position="233"/>
    </location>
</feature>
<evidence type="ECO:0000250" key="1"/>
<evidence type="ECO:0000255" key="2"/>
<evidence type="ECO:0000269" key="3">
    <source>
    </source>
</evidence>
<evidence type="ECO:0000269" key="4">
    <source>
    </source>
</evidence>
<evidence type="ECO:0000269" key="5">
    <source>
    </source>
</evidence>
<evidence type="ECO:0000269" key="6">
    <source>
    </source>
</evidence>
<evidence type="ECO:0000305" key="7"/>
<accession>Q54RV9</accession>
<accession>Q7Z271</accession>
<accession>Q9NC67</accession>
<comment type="function">
    <text evidence="1 5 6">Cleaves phosphorylated sphingoid bases (PSBs), such as sphingosine-1-phosphate, into fatty aldehydes and phosphoethanolamine (By similarity). Sphingosine-1-phosphate (S1P) probably acts intracellularly as a second messenger perhaps by promoting cell proliferation; the absence of S1P lyase increases its concentration. This leads to increased lateral pseudopod formation as well as defects in the efficiency of chemotaxis (PubMed:15476260). Overexpression of S1P lyase causes decreased growth rates, entry into stationary phase at lower cell density and increased sensitivity to the antitumor agents cisplatin and carboplatin; these effects are more pronounced in cells that express more enzyme (PubMed:15190000).</text>
</comment>
<comment type="catalytic activity">
    <reaction>
        <text>sphinganine 1-phosphate = hexadecanal + phosphoethanolamine</text>
        <dbReference type="Rhea" id="RHEA:18593"/>
        <dbReference type="ChEBI" id="CHEBI:17600"/>
        <dbReference type="ChEBI" id="CHEBI:57939"/>
        <dbReference type="ChEBI" id="CHEBI:58190"/>
        <dbReference type="EC" id="4.1.2.27"/>
    </reaction>
</comment>
<comment type="cofactor">
    <cofactor evidence="1">
        <name>pyridoxal 5'-phosphate</name>
        <dbReference type="ChEBI" id="CHEBI:597326"/>
    </cofactor>
</comment>
<comment type="pathway">
    <text>Lipid metabolism; sphingolipid metabolism.</text>
</comment>
<comment type="subcellular location">
    <subcellularLocation>
        <location evidence="7">Endoplasmic reticulum membrane</location>
        <topology evidence="7">Single-pass membrane protein</topology>
    </subcellularLocation>
</comment>
<comment type="developmental stage">
    <text evidence="4">Constitutively expressed during growth and development; not up-regulated by exposure to cisplatin.</text>
</comment>
<comment type="disruption phenotype">
    <text evidence="3 4 5">Cells produce short fruiting bodies with a thick stalk and drastically reduced numbers of spores. Mutant cells grow exponentially at the same rate as wild-type and are 25-fold more resistant to the antitumor agent cisplatin than are wild-type (PubMed:11566853). Mutant cells survive longer in stationary phase than wild-type cells, but are effected at multiple stages of development. Addition of 50 uM extracellular sphingosine-1-phosphate to wild-type cells mimics the developmental effect of the knockout (PubMed:11566853), and leads to increased cisplatin resistance (PubMed:15190000).</text>
</comment>
<comment type="similarity">
    <text evidence="7">Belongs to the group II decarboxylase family. Sphingosine-1-phosphate lyase subfamily.</text>
</comment>
<reference key="1">
    <citation type="journal article" date="2001" name="Development">
        <title>Sphingosine-1-phosphate lyase has a central role in the development of Dictyostelium discoideum.</title>
        <authorList>
            <person name="Li G."/>
            <person name="Foote C."/>
            <person name="Alexander S."/>
            <person name="Alexander H."/>
        </authorList>
    </citation>
    <scope>NUCLEOTIDE SEQUENCE [MRNA]</scope>
    <scope>DEVELOPMENTAL STAGE</scope>
    <scope>DISRUPTION PHENOTYPE</scope>
    <source>
        <strain>AX4</strain>
    </source>
</reference>
<reference key="2">
    <citation type="journal article" date="2005" name="Nature">
        <title>The genome of the social amoeba Dictyostelium discoideum.</title>
        <authorList>
            <person name="Eichinger L."/>
            <person name="Pachebat J.A."/>
            <person name="Gloeckner G."/>
            <person name="Rajandream M.A."/>
            <person name="Sucgang R."/>
            <person name="Berriman M."/>
            <person name="Song J."/>
            <person name="Olsen R."/>
            <person name="Szafranski K."/>
            <person name="Xu Q."/>
            <person name="Tunggal B."/>
            <person name="Kummerfeld S."/>
            <person name="Madera M."/>
            <person name="Konfortov B.A."/>
            <person name="Rivero F."/>
            <person name="Bankier A.T."/>
            <person name="Lehmann R."/>
            <person name="Hamlin N."/>
            <person name="Davies R."/>
            <person name="Gaudet P."/>
            <person name="Fey P."/>
            <person name="Pilcher K."/>
            <person name="Chen G."/>
            <person name="Saunders D."/>
            <person name="Sodergren E.J."/>
            <person name="Davis P."/>
            <person name="Kerhornou A."/>
            <person name="Nie X."/>
            <person name="Hall N."/>
            <person name="Anjard C."/>
            <person name="Hemphill L."/>
            <person name="Bason N."/>
            <person name="Farbrother P."/>
            <person name="Desany B."/>
            <person name="Just E."/>
            <person name="Morio T."/>
            <person name="Rost R."/>
            <person name="Churcher C.M."/>
            <person name="Cooper J."/>
            <person name="Haydock S."/>
            <person name="van Driessche N."/>
            <person name="Cronin A."/>
            <person name="Goodhead I."/>
            <person name="Muzny D.M."/>
            <person name="Mourier T."/>
            <person name="Pain A."/>
            <person name="Lu M."/>
            <person name="Harper D."/>
            <person name="Lindsay R."/>
            <person name="Hauser H."/>
            <person name="James K.D."/>
            <person name="Quiles M."/>
            <person name="Madan Babu M."/>
            <person name="Saito T."/>
            <person name="Buchrieser C."/>
            <person name="Wardroper A."/>
            <person name="Felder M."/>
            <person name="Thangavelu M."/>
            <person name="Johnson D."/>
            <person name="Knights A."/>
            <person name="Loulseged H."/>
            <person name="Mungall K.L."/>
            <person name="Oliver K."/>
            <person name="Price C."/>
            <person name="Quail M.A."/>
            <person name="Urushihara H."/>
            <person name="Hernandez J."/>
            <person name="Rabbinowitsch E."/>
            <person name="Steffen D."/>
            <person name="Sanders M."/>
            <person name="Ma J."/>
            <person name="Kohara Y."/>
            <person name="Sharp S."/>
            <person name="Simmonds M.N."/>
            <person name="Spiegler S."/>
            <person name="Tivey A."/>
            <person name="Sugano S."/>
            <person name="White B."/>
            <person name="Walker D."/>
            <person name="Woodward J.R."/>
            <person name="Winckler T."/>
            <person name="Tanaka Y."/>
            <person name="Shaulsky G."/>
            <person name="Schleicher M."/>
            <person name="Weinstock G.M."/>
            <person name="Rosenthal A."/>
            <person name="Cox E.C."/>
            <person name="Chisholm R.L."/>
            <person name="Gibbs R.A."/>
            <person name="Loomis W.F."/>
            <person name="Platzer M."/>
            <person name="Kay R.R."/>
            <person name="Williams J.G."/>
            <person name="Dear P.H."/>
            <person name="Noegel A.A."/>
            <person name="Barrell B.G."/>
            <person name="Kuspa A."/>
        </authorList>
    </citation>
    <scope>NUCLEOTIDE SEQUENCE [LARGE SCALE GENOMIC DNA]</scope>
    <source>
        <strain>AX4</strain>
    </source>
</reference>
<reference key="3">
    <citation type="journal article" date="2000" name="Microbiology">
        <title>Molecular basis for resistance to the anticancer drug cisplatin in Dictyostelium.</title>
        <authorList>
            <person name="Li G."/>
            <person name="Alexander H."/>
            <person name="Schneider N."/>
            <person name="Alexander S."/>
        </authorList>
    </citation>
    <scope>NUCLEOTIDE SEQUENCE [GENOMIC DNA] OF 232-270</scope>
    <scope>GENE EXPRESSION</scope>
    <scope>RESISTANCE TO CISPLATIN</scope>
    <scope>DISRUPTION PHENOTYPE</scope>
    <source>
        <strain>AX4</strain>
    </source>
</reference>
<reference key="4">
    <citation type="journal article" date="2004" name="Cell Motil. Cytoskeleton">
        <title>Sphingosine-1-phosphate plays a role in the suppression of lateral pseudopod formation during Dictyostelium discoideum cell migration and chemotaxis.</title>
        <authorList>
            <person name="Kumar A."/>
            <person name="Wessels D."/>
            <person name="Daniels K.J."/>
            <person name="Alexander H."/>
            <person name="Alexander S."/>
            <person name="Soll D.R."/>
        </authorList>
    </citation>
    <scope>FUNCTION</scope>
    <source>
        <strain>AX4</strain>
    </source>
</reference>
<reference key="5">
    <citation type="journal article" date="2004" name="Eukaryot. Cell">
        <title>Overexpression of sphingosine-1-phosphate lyase or inhibition of sphingosine kinase in Dictyostelium discoideum results in a selective increase in sensitivity to platinum-based chemotherapy drugs.</title>
        <authorList>
            <person name="Min J."/>
            <person name="Stegner A.L."/>
            <person name="Alexander H."/>
            <person name="Alexander S."/>
        </authorList>
    </citation>
    <scope>OVEREXPRESSING STRAINS ARE MORE SENSITIVE TO CISPLATIN</scope>
    <scope>A MODEL OF CISPLATIN-RESISTANCE</scope>
    <source>
        <strain>AX3</strain>
    </source>
</reference>
<proteinExistence type="evidence at transcript level"/>
<name>SGPL_DICDI</name>
<dbReference type="EC" id="4.1.2.27"/>
<dbReference type="EMBL" id="AY283052">
    <property type="protein sequence ID" value="AAP37027.1"/>
    <property type="molecule type" value="mRNA"/>
</dbReference>
<dbReference type="EMBL" id="AAFI02000047">
    <property type="protein sequence ID" value="EAL65989.1"/>
    <property type="molecule type" value="Genomic_DNA"/>
</dbReference>
<dbReference type="EMBL" id="AF233610">
    <property type="protein sequence ID" value="AAF97870.1"/>
    <property type="molecule type" value="Genomic_DNA"/>
</dbReference>
<dbReference type="RefSeq" id="XP_639378.1">
    <property type="nucleotide sequence ID" value="XM_634286.1"/>
</dbReference>
<dbReference type="SMR" id="Q54RV9"/>
<dbReference type="FunCoup" id="Q54RV9">
    <property type="interactions" value="249"/>
</dbReference>
<dbReference type="STRING" id="44689.Q54RV9"/>
<dbReference type="PaxDb" id="44689-DDB0214888"/>
<dbReference type="EnsemblProtists" id="EAL65989">
    <property type="protein sequence ID" value="EAL65989"/>
    <property type="gene ID" value="DDB_G0282819"/>
</dbReference>
<dbReference type="GeneID" id="8623817"/>
<dbReference type="KEGG" id="ddi:DDB_G0282819"/>
<dbReference type="dictyBase" id="DDB_G0282819">
    <property type="gene designation" value="sglA"/>
</dbReference>
<dbReference type="VEuPathDB" id="AmoebaDB:DDB_G0282819"/>
<dbReference type="eggNOG" id="KOG1383">
    <property type="taxonomic scope" value="Eukaryota"/>
</dbReference>
<dbReference type="HOGENOM" id="CLU_028929_1_0_1"/>
<dbReference type="InParanoid" id="Q54RV9"/>
<dbReference type="OMA" id="FKDHQFT"/>
<dbReference type="PhylomeDB" id="Q54RV9"/>
<dbReference type="BRENDA" id="4.1.2.27">
    <property type="organism ID" value="1939"/>
</dbReference>
<dbReference type="Reactome" id="R-DDI-9845614">
    <property type="pathway name" value="Sphingolipid catabolism"/>
</dbReference>
<dbReference type="UniPathway" id="UPA00222"/>
<dbReference type="PRO" id="PR:Q54RV9"/>
<dbReference type="Proteomes" id="UP000002195">
    <property type="component" value="Chromosome 3"/>
</dbReference>
<dbReference type="GO" id="GO:0005783">
    <property type="term" value="C:endoplasmic reticulum"/>
    <property type="evidence" value="ECO:0000318"/>
    <property type="project" value="GO_Central"/>
</dbReference>
<dbReference type="GO" id="GO:0005789">
    <property type="term" value="C:endoplasmic reticulum membrane"/>
    <property type="evidence" value="ECO:0007669"/>
    <property type="project" value="UniProtKB-SubCell"/>
</dbReference>
<dbReference type="GO" id="GO:0030170">
    <property type="term" value="F:pyridoxal phosphate binding"/>
    <property type="evidence" value="ECO:0007669"/>
    <property type="project" value="InterPro"/>
</dbReference>
<dbReference type="GO" id="GO:0008117">
    <property type="term" value="F:sphinganine-1-phosphate aldolase activity"/>
    <property type="evidence" value="ECO:0000250"/>
    <property type="project" value="dictyBase"/>
</dbReference>
<dbReference type="GO" id="GO:0030036">
    <property type="term" value="P:actin cytoskeleton organization"/>
    <property type="evidence" value="ECO:0000315"/>
    <property type="project" value="dictyBase"/>
</dbReference>
<dbReference type="GO" id="GO:0001667">
    <property type="term" value="P:ameboidal-type cell migration"/>
    <property type="evidence" value="ECO:0000315"/>
    <property type="project" value="dictyBase"/>
</dbReference>
<dbReference type="GO" id="GO:0019752">
    <property type="term" value="P:carboxylic acid metabolic process"/>
    <property type="evidence" value="ECO:0007669"/>
    <property type="project" value="InterPro"/>
</dbReference>
<dbReference type="GO" id="GO:0048870">
    <property type="term" value="P:cell motility"/>
    <property type="evidence" value="ECO:0000315"/>
    <property type="project" value="dictyBase"/>
</dbReference>
<dbReference type="GO" id="GO:0006935">
    <property type="term" value="P:chemotaxis"/>
    <property type="evidence" value="ECO:0000315"/>
    <property type="project" value="dictyBase"/>
</dbReference>
<dbReference type="GO" id="GO:0120320">
    <property type="term" value="P:lateral pseudopodium retraction"/>
    <property type="evidence" value="ECO:0000315"/>
    <property type="project" value="dictyBase"/>
</dbReference>
<dbReference type="GO" id="GO:0031158">
    <property type="term" value="P:negative regulation of aggregate size involved in sorocarp development"/>
    <property type="evidence" value="ECO:0000315"/>
    <property type="project" value="dictyBase"/>
</dbReference>
<dbReference type="GO" id="GO:0046956">
    <property type="term" value="P:positive phototaxis"/>
    <property type="evidence" value="ECO:0000315"/>
    <property type="project" value="dictyBase"/>
</dbReference>
<dbReference type="GO" id="GO:0097328">
    <property type="term" value="P:response to carboplatin"/>
    <property type="evidence" value="ECO:0000315"/>
    <property type="project" value="dictyBase"/>
</dbReference>
<dbReference type="GO" id="GO:0072718">
    <property type="term" value="P:response to cisplatin"/>
    <property type="evidence" value="ECO:0000315"/>
    <property type="project" value="dictyBase"/>
</dbReference>
<dbReference type="GO" id="GO:0031153">
    <property type="term" value="P:slug development involved in sorocarp development"/>
    <property type="evidence" value="ECO:0000315"/>
    <property type="project" value="dictyBase"/>
</dbReference>
<dbReference type="GO" id="GO:0030587">
    <property type="term" value="P:sorocarp development"/>
    <property type="evidence" value="ECO:0000315"/>
    <property type="project" value="dictyBase"/>
</dbReference>
<dbReference type="GO" id="GO:0030149">
    <property type="term" value="P:sphingolipid catabolic process"/>
    <property type="evidence" value="ECO:0000318"/>
    <property type="project" value="GO_Central"/>
</dbReference>
<dbReference type="GO" id="GO:0030435">
    <property type="term" value="P:sporulation resulting in formation of a cellular spore"/>
    <property type="evidence" value="ECO:0000315"/>
    <property type="project" value="dictyBase"/>
</dbReference>
<dbReference type="CDD" id="cd06450">
    <property type="entry name" value="DOPA_deC_like"/>
    <property type="match status" value="1"/>
</dbReference>
<dbReference type="FunFam" id="6.10.140.2150:FF:000001">
    <property type="entry name" value="Sphingosine-1-phosphate lyase 1"/>
    <property type="match status" value="1"/>
</dbReference>
<dbReference type="FunFam" id="3.40.640.10:FF:000020">
    <property type="entry name" value="sphingosine-1-phosphate lyase 1"/>
    <property type="match status" value="1"/>
</dbReference>
<dbReference type="Gene3D" id="6.10.140.2150">
    <property type="match status" value="1"/>
</dbReference>
<dbReference type="Gene3D" id="3.90.1150.10">
    <property type="entry name" value="Aspartate Aminotransferase, domain 1"/>
    <property type="match status" value="1"/>
</dbReference>
<dbReference type="Gene3D" id="3.40.640.10">
    <property type="entry name" value="Type I PLP-dependent aspartate aminotransferase-like (Major domain)"/>
    <property type="match status" value="1"/>
</dbReference>
<dbReference type="InterPro" id="IPR050477">
    <property type="entry name" value="GrpII_AminoAcid_Decarb"/>
</dbReference>
<dbReference type="InterPro" id="IPR002129">
    <property type="entry name" value="PyrdxlP-dep_de-COase"/>
</dbReference>
<dbReference type="InterPro" id="IPR015424">
    <property type="entry name" value="PyrdxlP-dep_Trfase"/>
</dbReference>
<dbReference type="InterPro" id="IPR015421">
    <property type="entry name" value="PyrdxlP-dep_Trfase_major"/>
</dbReference>
<dbReference type="InterPro" id="IPR015422">
    <property type="entry name" value="PyrdxlP-dep_Trfase_small"/>
</dbReference>
<dbReference type="PANTHER" id="PTHR42735">
    <property type="match status" value="1"/>
</dbReference>
<dbReference type="PANTHER" id="PTHR42735:SF6">
    <property type="entry name" value="SPHINGOSINE-1-PHOSPHATE LYASE 1"/>
    <property type="match status" value="1"/>
</dbReference>
<dbReference type="Pfam" id="PF00282">
    <property type="entry name" value="Pyridoxal_deC"/>
    <property type="match status" value="1"/>
</dbReference>
<dbReference type="SUPFAM" id="SSF53383">
    <property type="entry name" value="PLP-dependent transferases"/>
    <property type="match status" value="1"/>
</dbReference>
<keyword id="KW-0256">Endoplasmic reticulum</keyword>
<keyword id="KW-0443">Lipid metabolism</keyword>
<keyword id="KW-0456">Lyase</keyword>
<keyword id="KW-0472">Membrane</keyword>
<keyword id="KW-0663">Pyridoxal phosphate</keyword>
<keyword id="KW-1185">Reference proteome</keyword>
<keyword id="KW-0735">Signal-anchor</keyword>
<keyword id="KW-0746">Sphingolipid metabolism</keyword>
<keyword id="KW-0812">Transmembrane</keyword>
<keyword id="KW-1133">Transmembrane helix</keyword>